<keyword id="KW-0997">Cell inner membrane</keyword>
<keyword id="KW-1003">Cell membrane</keyword>
<keyword id="KW-0472">Membrane</keyword>
<keyword id="KW-1185">Reference proteome</keyword>
<keyword id="KW-0808">Transferase</keyword>
<keyword id="KW-0812">Transmembrane</keyword>
<keyword id="KW-1133">Transmembrane helix</keyword>
<dbReference type="EC" id="2.5.1.145" evidence="1"/>
<dbReference type="EMBL" id="BX571662">
    <property type="protein sequence ID" value="CAE11109.1"/>
    <property type="molecule type" value="Genomic_DNA"/>
</dbReference>
<dbReference type="RefSeq" id="WP_011139891.1">
    <property type="nucleotide sequence ID" value="NC_005090.1"/>
</dbReference>
<dbReference type="SMR" id="Q7M7S6"/>
<dbReference type="STRING" id="273121.WS2111"/>
<dbReference type="KEGG" id="wsu:WS2111"/>
<dbReference type="eggNOG" id="COG0682">
    <property type="taxonomic scope" value="Bacteria"/>
</dbReference>
<dbReference type="HOGENOM" id="CLU_013386_1_0_7"/>
<dbReference type="UniPathway" id="UPA00664"/>
<dbReference type="Proteomes" id="UP000000422">
    <property type="component" value="Chromosome"/>
</dbReference>
<dbReference type="GO" id="GO:0005886">
    <property type="term" value="C:plasma membrane"/>
    <property type="evidence" value="ECO:0007669"/>
    <property type="project" value="UniProtKB-SubCell"/>
</dbReference>
<dbReference type="GO" id="GO:0008961">
    <property type="term" value="F:phosphatidylglycerol-prolipoprotein diacylglyceryl transferase activity"/>
    <property type="evidence" value="ECO:0007669"/>
    <property type="project" value="UniProtKB-UniRule"/>
</dbReference>
<dbReference type="GO" id="GO:0042158">
    <property type="term" value="P:lipoprotein biosynthetic process"/>
    <property type="evidence" value="ECO:0007669"/>
    <property type="project" value="UniProtKB-UniRule"/>
</dbReference>
<dbReference type="HAMAP" id="MF_01147">
    <property type="entry name" value="Lgt"/>
    <property type="match status" value="1"/>
</dbReference>
<dbReference type="InterPro" id="IPR001640">
    <property type="entry name" value="Lgt"/>
</dbReference>
<dbReference type="NCBIfam" id="TIGR00544">
    <property type="entry name" value="lgt"/>
    <property type="match status" value="1"/>
</dbReference>
<dbReference type="PANTHER" id="PTHR30589:SF0">
    <property type="entry name" value="PHOSPHATIDYLGLYCEROL--PROLIPOPROTEIN DIACYLGLYCERYL TRANSFERASE"/>
    <property type="match status" value="1"/>
</dbReference>
<dbReference type="PANTHER" id="PTHR30589">
    <property type="entry name" value="PROLIPOPROTEIN DIACYLGLYCERYL TRANSFERASE"/>
    <property type="match status" value="1"/>
</dbReference>
<dbReference type="Pfam" id="PF01790">
    <property type="entry name" value="LGT"/>
    <property type="match status" value="1"/>
</dbReference>
<dbReference type="PROSITE" id="PS01311">
    <property type="entry name" value="LGT"/>
    <property type="match status" value="1"/>
</dbReference>
<protein>
    <recommendedName>
        <fullName evidence="1">Phosphatidylglycerol--prolipoprotein diacylglyceryl transferase</fullName>
        <ecNumber evidence="1">2.5.1.145</ecNumber>
    </recommendedName>
</protein>
<reference key="1">
    <citation type="journal article" date="2003" name="Proc. Natl. Acad. Sci. U.S.A.">
        <title>Complete genome sequence and analysis of Wolinella succinogenes.</title>
        <authorList>
            <person name="Baar C."/>
            <person name="Eppinger M."/>
            <person name="Raddatz G."/>
            <person name="Simon J."/>
            <person name="Lanz C."/>
            <person name="Klimmek O."/>
            <person name="Nandakumar R."/>
            <person name="Gross R."/>
            <person name="Rosinus A."/>
            <person name="Keller H."/>
            <person name="Jagtap P."/>
            <person name="Linke B."/>
            <person name="Meyer F."/>
            <person name="Lederer H."/>
            <person name="Schuster S.C."/>
        </authorList>
    </citation>
    <scope>NUCLEOTIDE SEQUENCE [LARGE SCALE GENOMIC DNA]</scope>
    <source>
        <strain>ATCC 29543 / DSM 1740 / CCUG 13145 / JCM 31913 / LMG 7466 / NCTC 11488 / FDC 602W</strain>
    </source>
</reference>
<gene>
    <name evidence="1" type="primary">lgt</name>
    <name type="ordered locus">WS2111</name>
</gene>
<evidence type="ECO:0000255" key="1">
    <source>
        <dbReference type="HAMAP-Rule" id="MF_01147"/>
    </source>
</evidence>
<feature type="chain" id="PRO_0000172716" description="Phosphatidylglycerol--prolipoprotein diacylglyceryl transferase">
    <location>
        <begin position="1"/>
        <end position="272"/>
    </location>
</feature>
<feature type="transmembrane region" description="Helical" evidence="1">
    <location>
        <begin position="24"/>
        <end position="44"/>
    </location>
</feature>
<feature type="transmembrane region" description="Helical" evidence="1">
    <location>
        <begin position="59"/>
        <end position="79"/>
    </location>
</feature>
<feature type="transmembrane region" description="Helical" evidence="1">
    <location>
        <begin position="102"/>
        <end position="122"/>
    </location>
</feature>
<feature type="transmembrane region" description="Helical" evidence="1">
    <location>
        <begin position="129"/>
        <end position="149"/>
    </location>
</feature>
<feature type="transmembrane region" description="Helical" evidence="1">
    <location>
        <begin position="180"/>
        <end position="200"/>
    </location>
</feature>
<feature type="transmembrane region" description="Helical" evidence="1">
    <location>
        <begin position="208"/>
        <end position="228"/>
    </location>
</feature>
<feature type="transmembrane region" description="Helical" evidence="1">
    <location>
        <begin position="244"/>
        <end position="264"/>
    </location>
</feature>
<feature type="binding site" evidence="1">
    <location>
        <position position="151"/>
    </location>
    <ligand>
        <name>a 1,2-diacyl-sn-glycero-3-phospho-(1'-sn-glycerol)</name>
        <dbReference type="ChEBI" id="CHEBI:64716"/>
    </ligand>
</feature>
<name>LGT_WOLSU</name>
<comment type="function">
    <text evidence="1">Catalyzes the transfer of the diacylglyceryl group from phosphatidylglycerol to the sulfhydryl group of the N-terminal cysteine of a prolipoprotein, the first step in the formation of mature lipoproteins.</text>
</comment>
<comment type="catalytic activity">
    <reaction evidence="1">
        <text>L-cysteinyl-[prolipoprotein] + a 1,2-diacyl-sn-glycero-3-phospho-(1'-sn-glycerol) = an S-1,2-diacyl-sn-glyceryl-L-cysteinyl-[prolipoprotein] + sn-glycerol 1-phosphate + H(+)</text>
        <dbReference type="Rhea" id="RHEA:56712"/>
        <dbReference type="Rhea" id="RHEA-COMP:14679"/>
        <dbReference type="Rhea" id="RHEA-COMP:14680"/>
        <dbReference type="ChEBI" id="CHEBI:15378"/>
        <dbReference type="ChEBI" id="CHEBI:29950"/>
        <dbReference type="ChEBI" id="CHEBI:57685"/>
        <dbReference type="ChEBI" id="CHEBI:64716"/>
        <dbReference type="ChEBI" id="CHEBI:140658"/>
        <dbReference type="EC" id="2.5.1.145"/>
    </reaction>
</comment>
<comment type="pathway">
    <text evidence="1">Protein modification; lipoprotein biosynthesis (diacylglyceryl transfer).</text>
</comment>
<comment type="subcellular location">
    <subcellularLocation>
        <location evidence="1">Cell inner membrane</location>
        <topology evidence="1">Multi-pass membrane protein</topology>
    </subcellularLocation>
</comment>
<comment type="similarity">
    <text evidence="1">Belongs to the Lgt family.</text>
</comment>
<sequence length="272" mass="31277">MEWNYLYNHFDPVAFDLWGLKVHWYGIAYVLALLVALWVAKWIAKKDAYPLSNEQLESYFIWVEVGVILGARLGYILFYDPFTAYYLTHPWQIFNPFQNGEFIGIRGMSYHGAVIGFLIASFLFAQRHGVKFWMLMDLVGISVPLGYVFGRIGNFLNQELIGRVTEVPWGIYVAGVLRHPSQLYEAFLEGIVLFVILYAWRSRVKFTGQLGIMYLILYALARFVAEFWREPDAQIGYLVGGVTMGQLLSLAMAIPCLVLWGYLAKKERGKIL</sequence>
<organism>
    <name type="scientific">Wolinella succinogenes (strain ATCC 29543 / DSM 1740 / CCUG 13145 / JCM 31913 / LMG 7466 / NCTC 11488 / FDC 602W)</name>
    <name type="common">Vibrio succinogenes</name>
    <dbReference type="NCBI Taxonomy" id="273121"/>
    <lineage>
        <taxon>Bacteria</taxon>
        <taxon>Pseudomonadati</taxon>
        <taxon>Campylobacterota</taxon>
        <taxon>Epsilonproteobacteria</taxon>
        <taxon>Campylobacterales</taxon>
        <taxon>Helicobacteraceae</taxon>
        <taxon>Wolinella</taxon>
    </lineage>
</organism>
<accession>Q7M7S6</accession>
<proteinExistence type="inferred from homology"/>